<reference key="1">
    <citation type="journal article" date="2003" name="PLoS Biol.">
        <title>The genome sequence of Caenorhabditis briggsae: a platform for comparative genomics.</title>
        <authorList>
            <person name="Stein L.D."/>
            <person name="Bao Z."/>
            <person name="Blasiar D."/>
            <person name="Blumenthal T."/>
            <person name="Brent M.R."/>
            <person name="Chen N."/>
            <person name="Chinwalla A."/>
            <person name="Clarke L."/>
            <person name="Clee C."/>
            <person name="Coghlan A."/>
            <person name="Coulson A."/>
            <person name="D'Eustachio P."/>
            <person name="Fitch D.H.A."/>
            <person name="Fulton L.A."/>
            <person name="Fulton R.E."/>
            <person name="Griffiths-Jones S."/>
            <person name="Harris T.W."/>
            <person name="Hillier L.W."/>
            <person name="Kamath R."/>
            <person name="Kuwabara P.E."/>
            <person name="Mardis E.R."/>
            <person name="Marra M.A."/>
            <person name="Miner T.L."/>
            <person name="Minx P."/>
            <person name="Mullikin J.C."/>
            <person name="Plumb R.W."/>
            <person name="Rogers J."/>
            <person name="Schein J.E."/>
            <person name="Sohrmann M."/>
            <person name="Spieth J."/>
            <person name="Stajich J.E."/>
            <person name="Wei C."/>
            <person name="Willey D."/>
            <person name="Wilson R.K."/>
            <person name="Durbin R.M."/>
            <person name="Waterston R.H."/>
        </authorList>
    </citation>
    <scope>NUCLEOTIDE SEQUENCE [LARGE SCALE GENOMIC DNA]</scope>
    <source>
        <strain>AF16</strain>
    </source>
</reference>
<proteinExistence type="inferred from homology"/>
<feature type="chain" id="PRO_0000307353" description="Synaptobrevin-1">
    <location>
        <begin position="1"/>
        <end position="108"/>
    </location>
</feature>
<feature type="topological domain" description="Cytoplasmic" evidence="4">
    <location>
        <begin position="1"/>
        <end position="85"/>
    </location>
</feature>
<feature type="transmembrane region" description="Helical; Anchor for type IV membrane protein" evidence="4">
    <location>
        <begin position="86"/>
        <end position="106"/>
    </location>
</feature>
<feature type="topological domain" description="Extracellular" evidence="4">
    <location>
        <begin position="107"/>
        <end position="108"/>
    </location>
</feature>
<feature type="domain" description="v-SNARE coiled-coil homology" evidence="5">
    <location>
        <begin position="22"/>
        <end position="82"/>
    </location>
</feature>
<feature type="region of interest" description="Disordered" evidence="6">
    <location>
        <begin position="1"/>
        <end position="25"/>
    </location>
</feature>
<keyword id="KW-1003">Cell membrane</keyword>
<keyword id="KW-0175">Coiled coil</keyword>
<keyword id="KW-0968">Cytoplasmic vesicle</keyword>
<keyword id="KW-0472">Membrane</keyword>
<keyword id="KW-1185">Reference proteome</keyword>
<keyword id="KW-0770">Synapse</keyword>
<keyword id="KW-0771">Synaptosome</keyword>
<keyword id="KW-0812">Transmembrane</keyword>
<keyword id="KW-1133">Transmembrane helix</keyword>
<sequence>MDAQGDAGAQGGSQGPRPSNKRLQQTQAQVDEVVGIMKVNVEKVLERDQKLSQLDDRADALQEGASQFEKSAATLKRKYWWKNIKMMIIMCAIVVILIIIIVLWAGGK</sequence>
<comment type="function">
    <text evidence="1">Involved in the targeting and/or fusion of transport vesicles to their target membrane. Acts in neuronal exocytosis of synaptic transmission. Likely to have a role in cholinergic transmisson. Required for viability, coordinated movement and M3 pharynx motor neuron function (By similarity).</text>
</comment>
<comment type="subunit">
    <text evidence="3">Part of the SNARE core complex containing CBG09569/SNAP25, snb-1/VAMP2 and CBG03570/STX1A. This complex binds to cpx-1/CPLX1 (By similarity).</text>
</comment>
<comment type="subcellular location">
    <subcellularLocation>
        <location evidence="2 3">Cytoplasmic vesicle</location>
        <location evidence="2 3">Secretory vesicle</location>
        <location evidence="2 3">Synaptic vesicle membrane</location>
        <topology evidence="2 3">Single-pass type IV membrane protein</topology>
    </subcellularLocation>
    <subcellularLocation>
        <location evidence="2 3">Cell membrane</location>
    </subcellularLocation>
    <subcellularLocation>
        <location evidence="1">Synapse</location>
        <location evidence="1">Synaptosome</location>
    </subcellularLocation>
</comment>
<comment type="similarity">
    <text evidence="4">Belongs to the synaptobrevin family.</text>
</comment>
<evidence type="ECO:0000250" key="1"/>
<evidence type="ECO:0000250" key="2">
    <source>
        <dbReference type="UniProtKB" id="O02495"/>
    </source>
</evidence>
<evidence type="ECO:0000250" key="3">
    <source>
        <dbReference type="UniProtKB" id="P63045"/>
    </source>
</evidence>
<evidence type="ECO:0000255" key="4"/>
<evidence type="ECO:0000255" key="5">
    <source>
        <dbReference type="PROSITE-ProRule" id="PRU00290"/>
    </source>
</evidence>
<evidence type="ECO:0000256" key="6">
    <source>
        <dbReference type="SAM" id="MobiDB-lite"/>
    </source>
</evidence>
<gene>
    <name evidence="2" type="primary">snb-1</name>
    <name type="ORF">CBG18986</name>
</gene>
<organism>
    <name type="scientific">Caenorhabditis briggsae</name>
    <dbReference type="NCBI Taxonomy" id="6238"/>
    <lineage>
        <taxon>Eukaryota</taxon>
        <taxon>Metazoa</taxon>
        <taxon>Ecdysozoa</taxon>
        <taxon>Nematoda</taxon>
        <taxon>Chromadorea</taxon>
        <taxon>Rhabditida</taxon>
        <taxon>Rhabditina</taxon>
        <taxon>Rhabditomorpha</taxon>
        <taxon>Rhabditoidea</taxon>
        <taxon>Rhabditidae</taxon>
        <taxon>Peloderinae</taxon>
        <taxon>Caenorhabditis</taxon>
    </lineage>
</organism>
<protein>
    <recommendedName>
        <fullName>Synaptobrevin-1</fullName>
    </recommendedName>
    <alternativeName>
        <fullName>Synaptobrevin-related protein 1</fullName>
    </alternativeName>
</protein>
<name>SYB1_CAEBR</name>
<dbReference type="EMBL" id="HE601047">
    <property type="protein sequence ID" value="CAP36306.1"/>
    <property type="molecule type" value="Genomic_DNA"/>
</dbReference>
<dbReference type="SMR" id="Q60WU2"/>
<dbReference type="FunCoup" id="Q60WU2">
    <property type="interactions" value="2264"/>
</dbReference>
<dbReference type="STRING" id="6238.Q60WU2"/>
<dbReference type="EnsemblMetazoa" id="CBG18986.1">
    <property type="protein sequence ID" value="CBG18986.1"/>
    <property type="gene ID" value="WBGene00038277"/>
</dbReference>
<dbReference type="KEGG" id="cbr:CBG_18986"/>
<dbReference type="CTD" id="8579293"/>
<dbReference type="WormBase" id="CBG18986">
    <property type="protein sequence ID" value="CBP04522"/>
    <property type="gene ID" value="WBGene00038277"/>
    <property type="gene designation" value="Cbr-snb-1"/>
</dbReference>
<dbReference type="eggNOG" id="KOG0860">
    <property type="taxonomic scope" value="Eukaryota"/>
</dbReference>
<dbReference type="HOGENOM" id="CLU_064620_4_1_1"/>
<dbReference type="InParanoid" id="Q60WU2"/>
<dbReference type="OMA" id="TEQFHRS"/>
<dbReference type="Proteomes" id="UP000008549">
    <property type="component" value="Unassembled WGS sequence"/>
</dbReference>
<dbReference type="GO" id="GO:0030424">
    <property type="term" value="C:axon"/>
    <property type="evidence" value="ECO:0007669"/>
    <property type="project" value="EnsemblMetazoa"/>
</dbReference>
<dbReference type="GO" id="GO:0060473">
    <property type="term" value="C:cortical granule"/>
    <property type="evidence" value="ECO:0007669"/>
    <property type="project" value="EnsemblMetazoa"/>
</dbReference>
<dbReference type="GO" id="GO:0005886">
    <property type="term" value="C:plasma membrane"/>
    <property type="evidence" value="ECO:0000318"/>
    <property type="project" value="GO_Central"/>
</dbReference>
<dbReference type="GO" id="GO:0048786">
    <property type="term" value="C:presynaptic active zone"/>
    <property type="evidence" value="ECO:0007669"/>
    <property type="project" value="EnsemblMetazoa"/>
</dbReference>
<dbReference type="GO" id="GO:0031201">
    <property type="term" value="C:SNARE complex"/>
    <property type="evidence" value="ECO:0000318"/>
    <property type="project" value="GO_Central"/>
</dbReference>
<dbReference type="GO" id="GO:0030672">
    <property type="term" value="C:synaptic vesicle membrane"/>
    <property type="evidence" value="ECO:0007669"/>
    <property type="project" value="UniProtKB-SubCell"/>
</dbReference>
<dbReference type="GO" id="GO:0005484">
    <property type="term" value="F:SNAP receptor activity"/>
    <property type="evidence" value="ECO:0000318"/>
    <property type="project" value="GO_Central"/>
</dbReference>
<dbReference type="GO" id="GO:0019905">
    <property type="term" value="F:syntaxin binding"/>
    <property type="evidence" value="ECO:0000318"/>
    <property type="project" value="GO_Central"/>
</dbReference>
<dbReference type="GO" id="GO:0030421">
    <property type="term" value="P:defecation"/>
    <property type="evidence" value="ECO:0007669"/>
    <property type="project" value="EnsemblMetazoa"/>
</dbReference>
<dbReference type="GO" id="GO:0002119">
    <property type="term" value="P:nematode larval development"/>
    <property type="evidence" value="ECO:0007669"/>
    <property type="project" value="EnsemblMetazoa"/>
</dbReference>
<dbReference type="GO" id="GO:0043134">
    <property type="term" value="P:regulation of hindgut contraction"/>
    <property type="evidence" value="ECO:0007669"/>
    <property type="project" value="EnsemblMetazoa"/>
</dbReference>
<dbReference type="GO" id="GO:0043051">
    <property type="term" value="P:regulation of nematode pharyngeal pumping"/>
    <property type="evidence" value="ECO:0007669"/>
    <property type="project" value="EnsemblMetazoa"/>
</dbReference>
<dbReference type="GO" id="GO:0007271">
    <property type="term" value="P:synaptic transmission, cholinergic"/>
    <property type="evidence" value="ECO:0007669"/>
    <property type="project" value="EnsemblMetazoa"/>
</dbReference>
<dbReference type="GO" id="GO:0016079">
    <property type="term" value="P:synaptic vesicle exocytosis"/>
    <property type="evidence" value="ECO:0007669"/>
    <property type="project" value="EnsemblMetazoa"/>
</dbReference>
<dbReference type="GO" id="GO:0006906">
    <property type="term" value="P:vesicle fusion"/>
    <property type="evidence" value="ECO:0000318"/>
    <property type="project" value="GO_Central"/>
</dbReference>
<dbReference type="CDD" id="cd15870">
    <property type="entry name" value="R-SNARE_VAMP2"/>
    <property type="match status" value="1"/>
</dbReference>
<dbReference type="FunFam" id="1.20.5.110:FF:000013">
    <property type="entry name" value="Vesicle-associated membrane protein 2"/>
    <property type="match status" value="1"/>
</dbReference>
<dbReference type="Gene3D" id="1.20.5.110">
    <property type="match status" value="1"/>
</dbReference>
<dbReference type="InterPro" id="IPR001388">
    <property type="entry name" value="Synaptobrevin-like"/>
</dbReference>
<dbReference type="InterPro" id="IPR016444">
    <property type="entry name" value="Synaptobrevin/VAMP"/>
</dbReference>
<dbReference type="InterPro" id="IPR042855">
    <property type="entry name" value="V_SNARE_CC"/>
</dbReference>
<dbReference type="PANTHER" id="PTHR45701">
    <property type="entry name" value="SYNAPTOBREVIN FAMILY MEMBER"/>
    <property type="match status" value="1"/>
</dbReference>
<dbReference type="Pfam" id="PF00957">
    <property type="entry name" value="Synaptobrevin"/>
    <property type="match status" value="1"/>
</dbReference>
<dbReference type="PIRSF" id="PIRSF005409">
    <property type="entry name" value="Synaptobrevin_euk"/>
    <property type="match status" value="1"/>
</dbReference>
<dbReference type="PRINTS" id="PR00219">
    <property type="entry name" value="SYNAPTOBREVN"/>
</dbReference>
<dbReference type="SUPFAM" id="SSF58038">
    <property type="entry name" value="SNARE fusion complex"/>
    <property type="match status" value="1"/>
</dbReference>
<dbReference type="PROSITE" id="PS00417">
    <property type="entry name" value="SYNAPTOBREVIN"/>
    <property type="match status" value="1"/>
</dbReference>
<dbReference type="PROSITE" id="PS50892">
    <property type="entry name" value="V_SNARE"/>
    <property type="match status" value="1"/>
</dbReference>
<accession>Q60WU2</accession>
<accession>A8XUI1</accession>